<accession>P06801</accession>
<accession>Q9DBF9</accession>
<feature type="chain" id="PRO_0000160193" description="NADP-dependent malic enzyme">
    <location>
        <begin position="1"/>
        <end position="572"/>
    </location>
</feature>
<feature type="active site" description="Proton donor" evidence="2">
    <location>
        <position position="102"/>
    </location>
</feature>
<feature type="active site" description="Proton acceptor" evidence="2">
    <location>
        <position position="173"/>
    </location>
</feature>
<feature type="binding site" evidence="1">
    <location>
        <position position="155"/>
    </location>
    <ligand>
        <name>NADP(+)</name>
        <dbReference type="ChEBI" id="CHEBI:58349"/>
    </ligand>
</feature>
<feature type="binding site" evidence="2">
    <location>
        <position position="245"/>
    </location>
    <ligand>
        <name>a divalent metal cation</name>
        <dbReference type="ChEBI" id="CHEBI:60240"/>
    </ligand>
</feature>
<feature type="binding site" evidence="2">
    <location>
        <position position="246"/>
    </location>
    <ligand>
        <name>a divalent metal cation</name>
        <dbReference type="ChEBI" id="CHEBI:60240"/>
    </ligand>
</feature>
<feature type="binding site" evidence="2">
    <location>
        <position position="269"/>
    </location>
    <ligand>
        <name>a divalent metal cation</name>
        <dbReference type="ChEBI" id="CHEBI:60240"/>
    </ligand>
</feature>
<feature type="binding site" evidence="1">
    <location>
        <position position="269"/>
    </location>
    <ligand>
        <name>NADP(+)</name>
        <dbReference type="ChEBI" id="CHEBI:58349"/>
    </ligand>
</feature>
<feature type="binding site" evidence="1">
    <location>
        <begin position="301"/>
        <end position="318"/>
    </location>
    <ligand>
        <name>NADP(+)</name>
        <dbReference type="ChEBI" id="CHEBI:58349"/>
    </ligand>
</feature>
<feature type="site" description="Important for activity" evidence="1">
    <location>
        <position position="269"/>
    </location>
</feature>
<feature type="modified residue" description="N-acetylmethionine" evidence="3">
    <location>
        <position position="1"/>
    </location>
</feature>
<feature type="modified residue" description="Phosphoserine" evidence="5">
    <location>
        <position position="336"/>
    </location>
</feature>
<feature type="sequence conflict" description="In Ref. 1; AAA39727 and 2; AAA39489." evidence="4" ref="1 2">
    <original>N</original>
    <variation>S</variation>
    <location>
        <position position="408"/>
    </location>
</feature>
<feature type="sequence conflict" description="In Ref. 1; AAA39727 and 2; AAA39489." evidence="4" ref="1 2">
    <original>EQ</original>
    <variation>DE</variation>
    <location>
        <begin position="418"/>
        <end position="419"/>
    </location>
</feature>
<feature type="sequence conflict" description="In Ref. 1; AAA39727 and 2; AAA39489." evidence="4" ref="1 2">
    <original>A</original>
    <variation>R</variation>
    <location>
        <position position="482"/>
    </location>
</feature>
<sequence length="572" mass="63954">MEPRAPRRRHTHQRGYLLTRDPHLNKDLAFTLEERQQLNIHGLLPPCIISQELQVLRIIKNFERLNSDFDRYLLLMDLQDRNEKLFYSVLMSDVEKFMPIVYTPTVGLACQQYSLAFRKPRGLFISIHDKGHIASVLNAWPEDVVKAIVVTDGERILGLGDLGCNGMGIPVGKLALYTACGGVNPQQCLPITLDVGTENEELLKDPLYIGLRHRRVRGPEYDAFLDEFMEAASSKYGMNCLIQFEDFANRNAFRLLNKYRNKYCTFNDDIQGTASVAVAGLLAALRITKNKLSDQTVLFQGAGEAALGIAHLVVMAMEKEGLSKENARKKIWLVDSKGLIVKGRASLTEEKEVFAHEHEEMKNLEAIVQKIKPTALIGVAAIGGAFTEQILKDMAAFNERPIIFALSNPTSKAECSAEQCYKVTKGRAIFASGSPFDPVTLPDGRTLFPGQGNNSYVFPGVALGVVACGLRHIDDKVFLTTAEVISQQVSDKHLQEGRLYPPLNTIRGVSLKIAVKIVQDAYKEKMATVYPEPQNKEEFVSSQMYSTNYDQILPDCYPWPAEVQKIQTKVNQ</sequence>
<keyword id="KW-0007">Acetylation</keyword>
<keyword id="KW-0963">Cytoplasm</keyword>
<keyword id="KW-0903">Direct protein sequencing</keyword>
<keyword id="KW-0479">Metal-binding</keyword>
<keyword id="KW-0521">NADP</keyword>
<keyword id="KW-0560">Oxidoreductase</keyword>
<keyword id="KW-0597">Phosphoprotein</keyword>
<keyword id="KW-1185">Reference proteome</keyword>
<dbReference type="EC" id="1.1.1.40" evidence="3"/>
<dbReference type="EMBL" id="J02652">
    <property type="protein sequence ID" value="AAA39727.1"/>
    <property type="molecule type" value="mRNA"/>
</dbReference>
<dbReference type="EMBL" id="M26756">
    <property type="protein sequence ID" value="AAA39489.1"/>
    <property type="molecule type" value="mRNA"/>
</dbReference>
<dbReference type="EMBL" id="AK004980">
    <property type="protein sequence ID" value="BAB23716.1"/>
    <property type="molecule type" value="mRNA"/>
</dbReference>
<dbReference type="EMBL" id="AK077968">
    <property type="protein sequence ID" value="BAC37086.1"/>
    <property type="molecule type" value="mRNA"/>
</dbReference>
<dbReference type="CCDS" id="CCDS23383.1"/>
<dbReference type="PIR" id="A26683">
    <property type="entry name" value="DEMSMX"/>
</dbReference>
<dbReference type="RefSeq" id="NP_001185862.1">
    <property type="nucleotide sequence ID" value="NM_001198933.1"/>
</dbReference>
<dbReference type="RefSeq" id="NP_032641.2">
    <property type="nucleotide sequence ID" value="NM_008615.2"/>
</dbReference>
<dbReference type="SMR" id="P06801"/>
<dbReference type="BioGRID" id="201464">
    <property type="interactions" value="7"/>
</dbReference>
<dbReference type="FunCoup" id="P06801">
    <property type="interactions" value="2476"/>
</dbReference>
<dbReference type="IntAct" id="P06801">
    <property type="interactions" value="2"/>
</dbReference>
<dbReference type="MINT" id="P06801"/>
<dbReference type="STRING" id="10090.ENSMUSP00000034989"/>
<dbReference type="GlyGen" id="P06801">
    <property type="glycosylation" value="1 site, 1 O-linked glycan (1 site)"/>
</dbReference>
<dbReference type="iPTMnet" id="P06801"/>
<dbReference type="MetOSite" id="P06801"/>
<dbReference type="PhosphoSitePlus" id="P06801"/>
<dbReference type="SwissPalm" id="P06801"/>
<dbReference type="REPRODUCTION-2DPAGE" id="P06801"/>
<dbReference type="CPTAC" id="non-CPTAC-3724"/>
<dbReference type="jPOST" id="P06801"/>
<dbReference type="PaxDb" id="10090-ENSMUSP00000034989"/>
<dbReference type="PeptideAtlas" id="P06801"/>
<dbReference type="ProteomicsDB" id="252726"/>
<dbReference type="Pumba" id="P06801"/>
<dbReference type="Antibodypedia" id="1633">
    <property type="antibodies" value="369 antibodies from 33 providers"/>
</dbReference>
<dbReference type="DNASU" id="17436"/>
<dbReference type="Ensembl" id="ENSMUST00000034989.15">
    <property type="protein sequence ID" value="ENSMUSP00000034989.9"/>
    <property type="gene ID" value="ENSMUSG00000032418.16"/>
</dbReference>
<dbReference type="GeneID" id="17436"/>
<dbReference type="KEGG" id="mmu:17436"/>
<dbReference type="UCSC" id="uc009qxs.2">
    <property type="organism name" value="mouse"/>
</dbReference>
<dbReference type="AGR" id="MGI:97043"/>
<dbReference type="CTD" id="4199"/>
<dbReference type="MGI" id="MGI:97043">
    <property type="gene designation" value="Me1"/>
</dbReference>
<dbReference type="VEuPathDB" id="HostDB:ENSMUSG00000032418"/>
<dbReference type="eggNOG" id="KOG1257">
    <property type="taxonomic scope" value="Eukaryota"/>
</dbReference>
<dbReference type="GeneTree" id="ENSGT00950000183134"/>
<dbReference type="HOGENOM" id="CLU_011405_5_2_1"/>
<dbReference type="InParanoid" id="P06801"/>
<dbReference type="OMA" id="QIVNHMV"/>
<dbReference type="OrthoDB" id="5365701at2759"/>
<dbReference type="PhylomeDB" id="P06801"/>
<dbReference type="TreeFam" id="TF300537"/>
<dbReference type="BRENDA" id="1.1.1.40">
    <property type="organism ID" value="3474"/>
</dbReference>
<dbReference type="Reactome" id="R-MMU-70268">
    <property type="pathway name" value="Pyruvate metabolism"/>
</dbReference>
<dbReference type="Reactome" id="R-MMU-9861718">
    <property type="pathway name" value="Regulation of pyruvate metabolism"/>
</dbReference>
<dbReference type="BioGRID-ORCS" id="17436">
    <property type="hits" value="0 hits in 78 CRISPR screens"/>
</dbReference>
<dbReference type="ChiTaRS" id="Me1">
    <property type="organism name" value="mouse"/>
</dbReference>
<dbReference type="PRO" id="PR:P06801"/>
<dbReference type="Proteomes" id="UP000000589">
    <property type="component" value="Chromosome 9"/>
</dbReference>
<dbReference type="RNAct" id="P06801">
    <property type="molecule type" value="protein"/>
</dbReference>
<dbReference type="Bgee" id="ENSMUSG00000032418">
    <property type="expression patterns" value="Expressed in gonadal fat pad and 252 other cell types or tissues"/>
</dbReference>
<dbReference type="ExpressionAtlas" id="P06801">
    <property type="expression patterns" value="baseline and differential"/>
</dbReference>
<dbReference type="GO" id="GO:0005829">
    <property type="term" value="C:cytosol"/>
    <property type="evidence" value="ECO:0000250"/>
    <property type="project" value="UniProtKB"/>
</dbReference>
<dbReference type="GO" id="GO:0005739">
    <property type="term" value="C:mitochondrion"/>
    <property type="evidence" value="ECO:0007005"/>
    <property type="project" value="MGI"/>
</dbReference>
<dbReference type="GO" id="GO:0042802">
    <property type="term" value="F:identical protein binding"/>
    <property type="evidence" value="ECO:0007669"/>
    <property type="project" value="Ensembl"/>
</dbReference>
<dbReference type="GO" id="GO:0000287">
    <property type="term" value="F:magnesium ion binding"/>
    <property type="evidence" value="ECO:0000250"/>
    <property type="project" value="UniProtKB"/>
</dbReference>
<dbReference type="GO" id="GO:0004473">
    <property type="term" value="F:malate dehydrogenase (decarboxylating) (NADP+) activity"/>
    <property type="evidence" value="ECO:0000314"/>
    <property type="project" value="MGI"/>
</dbReference>
<dbReference type="GO" id="GO:0004470">
    <property type="term" value="F:malic enzyme activity"/>
    <property type="evidence" value="ECO:0000250"/>
    <property type="project" value="UniProtKB"/>
</dbReference>
<dbReference type="GO" id="GO:0030145">
    <property type="term" value="F:manganese ion binding"/>
    <property type="evidence" value="ECO:0000250"/>
    <property type="project" value="UniProtKB"/>
</dbReference>
<dbReference type="GO" id="GO:0051287">
    <property type="term" value="F:NAD binding"/>
    <property type="evidence" value="ECO:0007669"/>
    <property type="project" value="InterPro"/>
</dbReference>
<dbReference type="GO" id="GO:0008948">
    <property type="term" value="F:oxaloacetate decarboxylase activity"/>
    <property type="evidence" value="ECO:0000250"/>
    <property type="project" value="UniProtKB"/>
</dbReference>
<dbReference type="GO" id="GO:0006108">
    <property type="term" value="P:malate metabolic process"/>
    <property type="evidence" value="ECO:0000250"/>
    <property type="project" value="UniProtKB"/>
</dbReference>
<dbReference type="GO" id="GO:0006734">
    <property type="term" value="P:NADH metabolic process"/>
    <property type="evidence" value="ECO:0007669"/>
    <property type="project" value="Ensembl"/>
</dbReference>
<dbReference type="GO" id="GO:0006739">
    <property type="term" value="P:NADP metabolic process"/>
    <property type="evidence" value="ECO:0007669"/>
    <property type="project" value="Ensembl"/>
</dbReference>
<dbReference type="GO" id="GO:0051289">
    <property type="term" value="P:protein homotetramerization"/>
    <property type="evidence" value="ECO:0000250"/>
    <property type="project" value="UniProtKB"/>
</dbReference>
<dbReference type="GO" id="GO:1902031">
    <property type="term" value="P:regulation of NADP metabolic process"/>
    <property type="evidence" value="ECO:0007669"/>
    <property type="project" value="Ensembl"/>
</dbReference>
<dbReference type="GO" id="GO:0009725">
    <property type="term" value="P:response to hormone"/>
    <property type="evidence" value="ECO:0000250"/>
    <property type="project" value="UniProtKB"/>
</dbReference>
<dbReference type="CDD" id="cd05312">
    <property type="entry name" value="NAD_bind_1_malic_enz"/>
    <property type="match status" value="1"/>
</dbReference>
<dbReference type="FunFam" id="3.40.50.10380:FF:000004">
    <property type="entry name" value="Malic enzyme"/>
    <property type="match status" value="1"/>
</dbReference>
<dbReference type="FunFam" id="3.40.50.720:FF:000060">
    <property type="entry name" value="Malic enzyme"/>
    <property type="match status" value="1"/>
</dbReference>
<dbReference type="Gene3D" id="3.40.50.10380">
    <property type="entry name" value="Malic enzyme, N-terminal domain"/>
    <property type="match status" value="1"/>
</dbReference>
<dbReference type="Gene3D" id="3.40.50.720">
    <property type="entry name" value="NAD(P)-binding Rossmann-like Domain"/>
    <property type="match status" value="1"/>
</dbReference>
<dbReference type="InterPro" id="IPR046346">
    <property type="entry name" value="Aminoacid_DH-like_N_sf"/>
</dbReference>
<dbReference type="InterPro" id="IPR015884">
    <property type="entry name" value="Malic_enzyme_CS"/>
</dbReference>
<dbReference type="InterPro" id="IPR012301">
    <property type="entry name" value="Malic_N_dom"/>
</dbReference>
<dbReference type="InterPro" id="IPR037062">
    <property type="entry name" value="Malic_N_dom_sf"/>
</dbReference>
<dbReference type="InterPro" id="IPR012302">
    <property type="entry name" value="Malic_NAD-bd"/>
</dbReference>
<dbReference type="InterPro" id="IPR001891">
    <property type="entry name" value="Malic_OxRdtase"/>
</dbReference>
<dbReference type="InterPro" id="IPR036291">
    <property type="entry name" value="NAD(P)-bd_dom_sf"/>
</dbReference>
<dbReference type="NCBIfam" id="NF010052">
    <property type="entry name" value="PRK13529.1"/>
    <property type="match status" value="1"/>
</dbReference>
<dbReference type="PANTHER" id="PTHR23406">
    <property type="entry name" value="MALIC ENZYME-RELATED"/>
    <property type="match status" value="1"/>
</dbReference>
<dbReference type="PANTHER" id="PTHR23406:SF17">
    <property type="entry name" value="NADP-DEPENDENT MALIC ENZYME"/>
    <property type="match status" value="1"/>
</dbReference>
<dbReference type="Pfam" id="PF00390">
    <property type="entry name" value="malic"/>
    <property type="match status" value="1"/>
</dbReference>
<dbReference type="Pfam" id="PF03949">
    <property type="entry name" value="Malic_M"/>
    <property type="match status" value="1"/>
</dbReference>
<dbReference type="PIRSF" id="PIRSF000106">
    <property type="entry name" value="ME"/>
    <property type="match status" value="1"/>
</dbReference>
<dbReference type="PRINTS" id="PR00072">
    <property type="entry name" value="MALOXRDTASE"/>
</dbReference>
<dbReference type="SMART" id="SM01274">
    <property type="entry name" value="malic"/>
    <property type="match status" value="1"/>
</dbReference>
<dbReference type="SMART" id="SM00919">
    <property type="entry name" value="Malic_M"/>
    <property type="match status" value="1"/>
</dbReference>
<dbReference type="SUPFAM" id="SSF53223">
    <property type="entry name" value="Aminoacid dehydrogenase-like, N-terminal domain"/>
    <property type="match status" value="1"/>
</dbReference>
<dbReference type="SUPFAM" id="SSF51735">
    <property type="entry name" value="NAD(P)-binding Rossmann-fold domains"/>
    <property type="match status" value="1"/>
</dbReference>
<dbReference type="PROSITE" id="PS00331">
    <property type="entry name" value="MALIC_ENZYMES"/>
    <property type="match status" value="1"/>
</dbReference>
<gene>
    <name type="primary">Me1</name>
    <name type="synonym">Mod-1</name>
    <name type="synonym">Mod1</name>
</gene>
<proteinExistence type="evidence at protein level"/>
<organism>
    <name type="scientific">Mus musculus</name>
    <name type="common">Mouse</name>
    <dbReference type="NCBI Taxonomy" id="10090"/>
    <lineage>
        <taxon>Eukaryota</taxon>
        <taxon>Metazoa</taxon>
        <taxon>Chordata</taxon>
        <taxon>Craniata</taxon>
        <taxon>Vertebrata</taxon>
        <taxon>Euteleostomi</taxon>
        <taxon>Mammalia</taxon>
        <taxon>Eutheria</taxon>
        <taxon>Euarchontoglires</taxon>
        <taxon>Glires</taxon>
        <taxon>Rodentia</taxon>
        <taxon>Myomorpha</taxon>
        <taxon>Muroidea</taxon>
        <taxon>Muridae</taxon>
        <taxon>Murinae</taxon>
        <taxon>Mus</taxon>
        <taxon>Mus</taxon>
    </lineage>
</organism>
<protein>
    <recommendedName>
        <fullName>NADP-dependent malic enzyme</fullName>
        <shortName>NADP-ME</shortName>
        <ecNumber evidence="3">1.1.1.40</ecNumber>
    </recommendedName>
    <alternativeName>
        <fullName>Malic enzyme 1</fullName>
    </alternativeName>
</protein>
<evidence type="ECO:0000250" key="1"/>
<evidence type="ECO:0000250" key="2">
    <source>
        <dbReference type="UniProtKB" id="P23368"/>
    </source>
</evidence>
<evidence type="ECO:0000250" key="3">
    <source>
        <dbReference type="UniProtKB" id="P48163"/>
    </source>
</evidence>
<evidence type="ECO:0000305" key="4"/>
<evidence type="ECO:0007744" key="5">
    <source>
    </source>
</evidence>
<name>MAOX_MOUSE</name>
<reference key="1">
    <citation type="journal article" date="1987" name="J. Biol. Chem.">
        <title>Structure and expression of murine malic enzyme mRNA. Differentiation-dependent accumulation of two forms of malic enzyme mRNA in 3T3-L1 cells.</title>
        <authorList>
            <person name="Bagchi S."/>
            <person name="Wise L.S."/>
            <person name="Brown M.L."/>
            <person name="Bregman D."/>
            <person name="Sul H.S."/>
            <person name="Rubin C.S."/>
        </authorList>
    </citation>
    <scope>NUCLEOTIDE SEQUENCE [MRNA]</scope>
</reference>
<reference key="2">
    <citation type="journal article" date="1986" name="Ann. N. Y. Acad. Sci.">
        <title>Regulation and structure of murine malic enzyme mRNA.</title>
        <authorList>
            <person name="Bagchi S."/>
            <person name="Wise L.S."/>
            <person name="Brown M.L."/>
            <person name="Sul H.S."/>
            <person name="Bregman D.B."/>
            <person name="Rubin C.S."/>
        </authorList>
    </citation>
    <scope>NUCLEOTIDE SEQUENCE [MRNA]</scope>
    <source>
        <tissue>Liver</tissue>
    </source>
</reference>
<reference key="3">
    <citation type="journal article" date="2005" name="Science">
        <title>The transcriptional landscape of the mammalian genome.</title>
        <authorList>
            <person name="Carninci P."/>
            <person name="Kasukawa T."/>
            <person name="Katayama S."/>
            <person name="Gough J."/>
            <person name="Frith M.C."/>
            <person name="Maeda N."/>
            <person name="Oyama R."/>
            <person name="Ravasi T."/>
            <person name="Lenhard B."/>
            <person name="Wells C."/>
            <person name="Kodzius R."/>
            <person name="Shimokawa K."/>
            <person name="Bajic V.B."/>
            <person name="Brenner S.E."/>
            <person name="Batalov S."/>
            <person name="Forrest A.R."/>
            <person name="Zavolan M."/>
            <person name="Davis M.J."/>
            <person name="Wilming L.G."/>
            <person name="Aidinis V."/>
            <person name="Allen J.E."/>
            <person name="Ambesi-Impiombato A."/>
            <person name="Apweiler R."/>
            <person name="Aturaliya R.N."/>
            <person name="Bailey T.L."/>
            <person name="Bansal M."/>
            <person name="Baxter L."/>
            <person name="Beisel K.W."/>
            <person name="Bersano T."/>
            <person name="Bono H."/>
            <person name="Chalk A.M."/>
            <person name="Chiu K.P."/>
            <person name="Choudhary V."/>
            <person name="Christoffels A."/>
            <person name="Clutterbuck D.R."/>
            <person name="Crowe M.L."/>
            <person name="Dalla E."/>
            <person name="Dalrymple B.P."/>
            <person name="de Bono B."/>
            <person name="Della Gatta G."/>
            <person name="di Bernardo D."/>
            <person name="Down T."/>
            <person name="Engstrom P."/>
            <person name="Fagiolini M."/>
            <person name="Faulkner G."/>
            <person name="Fletcher C.F."/>
            <person name="Fukushima T."/>
            <person name="Furuno M."/>
            <person name="Futaki S."/>
            <person name="Gariboldi M."/>
            <person name="Georgii-Hemming P."/>
            <person name="Gingeras T.R."/>
            <person name="Gojobori T."/>
            <person name="Green R.E."/>
            <person name="Gustincich S."/>
            <person name="Harbers M."/>
            <person name="Hayashi Y."/>
            <person name="Hensch T.K."/>
            <person name="Hirokawa N."/>
            <person name="Hill D."/>
            <person name="Huminiecki L."/>
            <person name="Iacono M."/>
            <person name="Ikeo K."/>
            <person name="Iwama A."/>
            <person name="Ishikawa T."/>
            <person name="Jakt M."/>
            <person name="Kanapin A."/>
            <person name="Katoh M."/>
            <person name="Kawasawa Y."/>
            <person name="Kelso J."/>
            <person name="Kitamura H."/>
            <person name="Kitano H."/>
            <person name="Kollias G."/>
            <person name="Krishnan S.P."/>
            <person name="Kruger A."/>
            <person name="Kummerfeld S.K."/>
            <person name="Kurochkin I.V."/>
            <person name="Lareau L.F."/>
            <person name="Lazarevic D."/>
            <person name="Lipovich L."/>
            <person name="Liu J."/>
            <person name="Liuni S."/>
            <person name="McWilliam S."/>
            <person name="Madan Babu M."/>
            <person name="Madera M."/>
            <person name="Marchionni L."/>
            <person name="Matsuda H."/>
            <person name="Matsuzawa S."/>
            <person name="Miki H."/>
            <person name="Mignone F."/>
            <person name="Miyake S."/>
            <person name="Morris K."/>
            <person name="Mottagui-Tabar S."/>
            <person name="Mulder N."/>
            <person name="Nakano N."/>
            <person name="Nakauchi H."/>
            <person name="Ng P."/>
            <person name="Nilsson R."/>
            <person name="Nishiguchi S."/>
            <person name="Nishikawa S."/>
            <person name="Nori F."/>
            <person name="Ohara O."/>
            <person name="Okazaki Y."/>
            <person name="Orlando V."/>
            <person name="Pang K.C."/>
            <person name="Pavan W.J."/>
            <person name="Pavesi G."/>
            <person name="Pesole G."/>
            <person name="Petrovsky N."/>
            <person name="Piazza S."/>
            <person name="Reed J."/>
            <person name="Reid J.F."/>
            <person name="Ring B.Z."/>
            <person name="Ringwald M."/>
            <person name="Rost B."/>
            <person name="Ruan Y."/>
            <person name="Salzberg S.L."/>
            <person name="Sandelin A."/>
            <person name="Schneider C."/>
            <person name="Schoenbach C."/>
            <person name="Sekiguchi K."/>
            <person name="Semple C.A."/>
            <person name="Seno S."/>
            <person name="Sessa L."/>
            <person name="Sheng Y."/>
            <person name="Shibata Y."/>
            <person name="Shimada H."/>
            <person name="Shimada K."/>
            <person name="Silva D."/>
            <person name="Sinclair B."/>
            <person name="Sperling S."/>
            <person name="Stupka E."/>
            <person name="Sugiura K."/>
            <person name="Sultana R."/>
            <person name="Takenaka Y."/>
            <person name="Taki K."/>
            <person name="Tammoja K."/>
            <person name="Tan S.L."/>
            <person name="Tang S."/>
            <person name="Taylor M.S."/>
            <person name="Tegner J."/>
            <person name="Teichmann S.A."/>
            <person name="Ueda H.R."/>
            <person name="van Nimwegen E."/>
            <person name="Verardo R."/>
            <person name="Wei C.L."/>
            <person name="Yagi K."/>
            <person name="Yamanishi H."/>
            <person name="Zabarovsky E."/>
            <person name="Zhu S."/>
            <person name="Zimmer A."/>
            <person name="Hide W."/>
            <person name="Bult C."/>
            <person name="Grimmond S.M."/>
            <person name="Teasdale R.D."/>
            <person name="Liu E.T."/>
            <person name="Brusic V."/>
            <person name="Quackenbush J."/>
            <person name="Wahlestedt C."/>
            <person name="Mattick J.S."/>
            <person name="Hume D.A."/>
            <person name="Kai C."/>
            <person name="Sasaki D."/>
            <person name="Tomaru Y."/>
            <person name="Fukuda S."/>
            <person name="Kanamori-Katayama M."/>
            <person name="Suzuki M."/>
            <person name="Aoki J."/>
            <person name="Arakawa T."/>
            <person name="Iida J."/>
            <person name="Imamura K."/>
            <person name="Itoh M."/>
            <person name="Kato T."/>
            <person name="Kawaji H."/>
            <person name="Kawagashira N."/>
            <person name="Kawashima T."/>
            <person name="Kojima M."/>
            <person name="Kondo S."/>
            <person name="Konno H."/>
            <person name="Nakano K."/>
            <person name="Ninomiya N."/>
            <person name="Nishio T."/>
            <person name="Okada M."/>
            <person name="Plessy C."/>
            <person name="Shibata K."/>
            <person name="Shiraki T."/>
            <person name="Suzuki S."/>
            <person name="Tagami M."/>
            <person name="Waki K."/>
            <person name="Watahiki A."/>
            <person name="Okamura-Oho Y."/>
            <person name="Suzuki H."/>
            <person name="Kawai J."/>
            <person name="Hayashizaki Y."/>
        </authorList>
    </citation>
    <scope>NUCLEOTIDE SEQUENCE [LARGE SCALE MRNA]</scope>
    <source>
        <strain>C57BL/6J</strain>
        <tissue>Liver</tissue>
        <tissue>Testis</tissue>
    </source>
</reference>
<reference key="4">
    <citation type="submission" date="2007-03" db="UniProtKB">
        <authorList>
            <person name="Lubec G."/>
            <person name="Klug S."/>
        </authorList>
    </citation>
    <scope>PROTEIN SEQUENCE OF 428-445</scope>
    <scope>IDENTIFICATION BY MASS SPECTROMETRY</scope>
    <source>
        <tissue>Hippocampus</tissue>
    </source>
</reference>
<reference key="5">
    <citation type="journal article" date="2010" name="Cell">
        <title>A tissue-specific atlas of mouse protein phosphorylation and expression.</title>
        <authorList>
            <person name="Huttlin E.L."/>
            <person name="Jedrychowski M.P."/>
            <person name="Elias J.E."/>
            <person name="Goswami T."/>
            <person name="Rad R."/>
            <person name="Beausoleil S.A."/>
            <person name="Villen J."/>
            <person name="Haas W."/>
            <person name="Sowa M.E."/>
            <person name="Gygi S.P."/>
        </authorList>
    </citation>
    <scope>PHOSPHORYLATION [LARGE SCALE ANALYSIS] AT SER-336</scope>
    <scope>IDENTIFICATION BY MASS SPECTROMETRY [LARGE SCALE ANALYSIS]</scope>
    <source>
        <tissue>Brain</tissue>
        <tissue>Brown adipose tissue</tissue>
        <tissue>Heart</tissue>
        <tissue>Kidney</tissue>
        <tissue>Liver</tissue>
        <tissue>Lung</tissue>
        <tissue>Pancreas</tissue>
        <tissue>Spleen</tissue>
        <tissue>Testis</tissue>
    </source>
</reference>
<comment type="function">
    <text evidence="3">Catalyzes the oxidative decarboxylation of (S)-malate in the presence of NADP(+) and divalent metal ions, and decarboxylation of oxaloacetate.</text>
</comment>
<comment type="catalytic activity">
    <reaction evidence="3">
        <text>(S)-malate + NADP(+) = pyruvate + CO2 + NADPH</text>
        <dbReference type="Rhea" id="RHEA:18253"/>
        <dbReference type="ChEBI" id="CHEBI:15361"/>
        <dbReference type="ChEBI" id="CHEBI:15589"/>
        <dbReference type="ChEBI" id="CHEBI:16526"/>
        <dbReference type="ChEBI" id="CHEBI:57783"/>
        <dbReference type="ChEBI" id="CHEBI:58349"/>
        <dbReference type="EC" id="1.1.1.40"/>
    </reaction>
    <physiologicalReaction direction="left-to-right" evidence="3">
        <dbReference type="Rhea" id="RHEA:18254"/>
    </physiologicalReaction>
    <physiologicalReaction direction="right-to-left" evidence="3">
        <dbReference type="Rhea" id="RHEA:18255"/>
    </physiologicalReaction>
</comment>
<comment type="catalytic activity">
    <reaction evidence="3">
        <text>oxaloacetate + H(+) = pyruvate + CO2</text>
        <dbReference type="Rhea" id="RHEA:15641"/>
        <dbReference type="ChEBI" id="CHEBI:15361"/>
        <dbReference type="ChEBI" id="CHEBI:15378"/>
        <dbReference type="ChEBI" id="CHEBI:16452"/>
        <dbReference type="ChEBI" id="CHEBI:16526"/>
        <dbReference type="EC" id="1.1.1.40"/>
    </reaction>
    <physiologicalReaction direction="left-to-right" evidence="3">
        <dbReference type="Rhea" id="RHEA:15642"/>
    </physiologicalReaction>
</comment>
<comment type="cofactor">
    <cofactor evidence="3">
        <name>Mg(2+)</name>
        <dbReference type="ChEBI" id="CHEBI:18420"/>
    </cofactor>
    <cofactor evidence="3">
        <name>Mn(2+)</name>
        <dbReference type="ChEBI" id="CHEBI:29035"/>
    </cofactor>
    <text evidence="3">Divalent metal cations. Prefers magnesium or manganese.</text>
</comment>
<comment type="subunit">
    <text evidence="3">Homotetramer.</text>
</comment>
<comment type="subcellular location">
    <subcellularLocation>
        <location evidence="3">Cytoplasm</location>
    </subcellularLocation>
</comment>
<comment type="similarity">
    <text evidence="4">Belongs to the malic enzymes family.</text>
</comment>